<evidence type="ECO:0000255" key="1">
    <source>
        <dbReference type="HAMAP-Rule" id="MF_00337"/>
    </source>
</evidence>
<evidence type="ECO:0000305" key="2"/>
<feature type="chain" id="PRO_0000206977" description="Exodeoxyribonuclease 7 small subunit">
    <location>
        <begin position="1"/>
        <end position="74"/>
    </location>
</feature>
<accession>Q9JSM1</accession>
<accession>A1IU47</accession>
<name>EX7S_NEIMA</name>
<reference key="1">
    <citation type="journal article" date="2000" name="Nature">
        <title>Complete DNA sequence of a serogroup A strain of Neisseria meningitidis Z2491.</title>
        <authorList>
            <person name="Parkhill J."/>
            <person name="Achtman M."/>
            <person name="James K.D."/>
            <person name="Bentley S.D."/>
            <person name="Churcher C.M."/>
            <person name="Klee S.R."/>
            <person name="Morelli G."/>
            <person name="Basham D."/>
            <person name="Brown D."/>
            <person name="Chillingworth T."/>
            <person name="Davies R.M."/>
            <person name="Davis P."/>
            <person name="Devlin K."/>
            <person name="Feltwell T."/>
            <person name="Hamlin N."/>
            <person name="Holroyd S."/>
            <person name="Jagels K."/>
            <person name="Leather S."/>
            <person name="Moule S."/>
            <person name="Mungall K.L."/>
            <person name="Quail M.A."/>
            <person name="Rajandream M.A."/>
            <person name="Rutherford K.M."/>
            <person name="Simmonds M."/>
            <person name="Skelton J."/>
            <person name="Whitehead S."/>
            <person name="Spratt B.G."/>
            <person name="Barrell B.G."/>
        </authorList>
    </citation>
    <scope>NUCLEOTIDE SEQUENCE [LARGE SCALE GENOMIC DNA]</scope>
    <source>
        <strain>DSM 15465 / Z2491</strain>
    </source>
</reference>
<gene>
    <name evidence="1" type="primary">xseB</name>
    <name type="ordered locus">NMA2225</name>
</gene>
<comment type="function">
    <text evidence="1">Bidirectionally degrades single-stranded DNA into large acid-insoluble oligonucleotides, which are then degraded further into small acid-soluble oligonucleotides.</text>
</comment>
<comment type="catalytic activity">
    <reaction evidence="1">
        <text>Exonucleolytic cleavage in either 5'- to 3'- or 3'- to 5'-direction to yield nucleoside 5'-phosphates.</text>
        <dbReference type="EC" id="3.1.11.6"/>
    </reaction>
</comment>
<comment type="subunit">
    <text evidence="1">Heterooligomer composed of large and small subunits.</text>
</comment>
<comment type="subcellular location">
    <subcellularLocation>
        <location evidence="1">Cytoplasm</location>
    </subcellularLocation>
</comment>
<comment type="similarity">
    <text evidence="1 2">Belongs to the XseB family.</text>
</comment>
<sequence>MKKNAPKSFEEALSRLESLTQAMQGEMPLEDALAAYQEGNELVIYCQTKLAQVEQKLQVLDADGLKELNLESDE</sequence>
<dbReference type="EC" id="3.1.11.6" evidence="1"/>
<dbReference type="EMBL" id="AL157959">
    <property type="protein sequence ID" value="CAM09317.1"/>
    <property type="molecule type" value="Genomic_DNA"/>
</dbReference>
<dbReference type="PIR" id="D81796">
    <property type="entry name" value="D81796"/>
</dbReference>
<dbReference type="SMR" id="Q9JSM1"/>
<dbReference type="DNASU" id="907223"/>
<dbReference type="EnsemblBacteria" id="CAM09317">
    <property type="protein sequence ID" value="CAM09317"/>
    <property type="gene ID" value="NMA2225"/>
</dbReference>
<dbReference type="KEGG" id="nma:NMA2225"/>
<dbReference type="HOGENOM" id="CLU_145918_2_0_4"/>
<dbReference type="Proteomes" id="UP000000626">
    <property type="component" value="Chromosome"/>
</dbReference>
<dbReference type="GO" id="GO:0005829">
    <property type="term" value="C:cytosol"/>
    <property type="evidence" value="ECO:0007669"/>
    <property type="project" value="TreeGrafter"/>
</dbReference>
<dbReference type="GO" id="GO:0009318">
    <property type="term" value="C:exodeoxyribonuclease VII complex"/>
    <property type="evidence" value="ECO:0007669"/>
    <property type="project" value="InterPro"/>
</dbReference>
<dbReference type="GO" id="GO:0008855">
    <property type="term" value="F:exodeoxyribonuclease VII activity"/>
    <property type="evidence" value="ECO:0007669"/>
    <property type="project" value="UniProtKB-UniRule"/>
</dbReference>
<dbReference type="GO" id="GO:0006308">
    <property type="term" value="P:DNA catabolic process"/>
    <property type="evidence" value="ECO:0007669"/>
    <property type="project" value="UniProtKB-UniRule"/>
</dbReference>
<dbReference type="Gene3D" id="1.10.287.1040">
    <property type="entry name" value="Exonuclease VII, small subunit"/>
    <property type="match status" value="1"/>
</dbReference>
<dbReference type="HAMAP" id="MF_00337">
    <property type="entry name" value="Exonuc_7_S"/>
    <property type="match status" value="1"/>
</dbReference>
<dbReference type="InterPro" id="IPR003761">
    <property type="entry name" value="Exonuc_VII_S"/>
</dbReference>
<dbReference type="InterPro" id="IPR037004">
    <property type="entry name" value="Exonuc_VII_ssu_sf"/>
</dbReference>
<dbReference type="NCBIfam" id="NF002141">
    <property type="entry name" value="PRK00977.1-5"/>
    <property type="match status" value="1"/>
</dbReference>
<dbReference type="NCBIfam" id="TIGR01280">
    <property type="entry name" value="xseB"/>
    <property type="match status" value="1"/>
</dbReference>
<dbReference type="PANTHER" id="PTHR34137">
    <property type="entry name" value="EXODEOXYRIBONUCLEASE 7 SMALL SUBUNIT"/>
    <property type="match status" value="1"/>
</dbReference>
<dbReference type="PANTHER" id="PTHR34137:SF1">
    <property type="entry name" value="EXODEOXYRIBONUCLEASE 7 SMALL SUBUNIT"/>
    <property type="match status" value="1"/>
</dbReference>
<dbReference type="Pfam" id="PF02609">
    <property type="entry name" value="Exonuc_VII_S"/>
    <property type="match status" value="1"/>
</dbReference>
<dbReference type="PIRSF" id="PIRSF006488">
    <property type="entry name" value="Exonuc_VII_S"/>
    <property type="match status" value="1"/>
</dbReference>
<dbReference type="SUPFAM" id="SSF116842">
    <property type="entry name" value="XseB-like"/>
    <property type="match status" value="1"/>
</dbReference>
<organism>
    <name type="scientific">Neisseria meningitidis serogroup A / serotype 4A (strain DSM 15465 / Z2491)</name>
    <dbReference type="NCBI Taxonomy" id="122587"/>
    <lineage>
        <taxon>Bacteria</taxon>
        <taxon>Pseudomonadati</taxon>
        <taxon>Pseudomonadota</taxon>
        <taxon>Betaproteobacteria</taxon>
        <taxon>Neisseriales</taxon>
        <taxon>Neisseriaceae</taxon>
        <taxon>Neisseria</taxon>
    </lineage>
</organism>
<keyword id="KW-0963">Cytoplasm</keyword>
<keyword id="KW-0269">Exonuclease</keyword>
<keyword id="KW-0378">Hydrolase</keyword>
<keyword id="KW-0540">Nuclease</keyword>
<protein>
    <recommendedName>
        <fullName evidence="1">Exodeoxyribonuclease 7 small subunit</fullName>
        <ecNumber evidence="1">3.1.11.6</ecNumber>
    </recommendedName>
    <alternativeName>
        <fullName evidence="1">Exodeoxyribonuclease VII small subunit</fullName>
        <shortName evidence="1">Exonuclease VII small subunit</shortName>
    </alternativeName>
</protein>
<proteinExistence type="inferred from homology"/>